<accession>P0DO84</accession>
<name>AT_STRNX</name>
<comment type="function">
    <text evidence="3">Malonylransferase involved in the biosynthesis of curare monoterpene indole alkaloids (MIAs), natural products such as strychnine, a neurotoxic compound used as a pesticide to control rodents, and its pharmacologically active derivatives, including brucine, used to regulate blood pressure (PubMed:35794473). Curare alkaloids act as animal glycine receptor antagonists (PubMed:35794473). Catalyzes the conversion of 17,18-epoxy-17-hydroxycur-19-ene (Wieland-Gumlich aldehyde) to prestrychnine, which is spontaneously converted into strychnine and isostrychnine (PubMed:35794473).</text>
</comment>
<comment type="catalytic activity">
    <reaction evidence="3">
        <text>17,18-epoxy-17-hydroxycur-19-ene + malonyl-CoA = prestrychnine + CoA</text>
        <dbReference type="Rhea" id="RHEA:80919"/>
        <dbReference type="ChEBI" id="CHEBI:57287"/>
        <dbReference type="ChEBI" id="CHEBI:57384"/>
        <dbReference type="ChEBI" id="CHEBI:231746"/>
        <dbReference type="ChEBI" id="CHEBI:231748"/>
        <dbReference type="EC" id="2.3.1.325"/>
    </reaction>
    <physiologicalReaction direction="left-to-right" evidence="3">
        <dbReference type="Rhea" id="RHEA:80920"/>
    </physiologicalReaction>
</comment>
<comment type="pathway">
    <text evidence="3">Alkaloid biosynthesis.</text>
</comment>
<comment type="subunit">
    <text evidence="2">Monomer.</text>
</comment>
<comment type="subcellular location">
    <subcellularLocation>
        <location evidence="3">Cytoplasm</location>
    </subcellularLocation>
</comment>
<comment type="tissue specificity">
    <text evidence="3">Mainly expressed in roots.</text>
</comment>
<comment type="similarity">
    <text evidence="5">Belongs to the plant acyltransferase family.</text>
</comment>
<keyword id="KW-0012">Acyltransferase</keyword>
<keyword id="KW-0017">Alkaloid metabolism</keyword>
<keyword id="KW-0963">Cytoplasm</keyword>
<keyword id="KW-0808">Transferase</keyword>
<reference key="1">
    <citation type="journal article" date="2022" name="Nature">
        <title>Biosynthesis of strychnine.</title>
        <authorList>
            <person name="Hong B."/>
            <person name="Grzech D."/>
            <person name="Caputi L."/>
            <person name="Sonawane P."/>
            <person name="Lopez C.E.R."/>
            <person name="Kamileen M.O."/>
            <person name="Hernandez Lozada N.J."/>
            <person name="Grabe V."/>
            <person name="O'Connor S.E."/>
        </authorList>
    </citation>
    <scope>NUCLEOTIDE SEQUENCE [MRNA]</scope>
    <scope>FUNCTION</scope>
    <scope>CATALYTIC ACTIVITY</scope>
    <scope>PATHWAY</scope>
    <scope>TISSUE SPECIFICITY</scope>
    <scope>SUBCELLULAR LOCATION</scope>
</reference>
<sequence length="464" mass="51638">MNRIGSLYFNTKFVKSKVCNSTYKAFPLIINHHTMASFQIQIISETLIKPSSPTPPSLKQHRFSDYDKTMHHMYIPAAFLYTSHGHGITSTDEVSQLLKNSLSKTLSHYYHFAGRLVGDSHVDCNDMGVKLFEVRVRCPMTEVLKRPNTDAKDLVFPKGLPWSMGEGDILVVAQITYFDCGGIAISTDMSHKIVDVSSIATFMKDWAAMARNSSHQPYPVIVSPTILPMDDIPATAEDDIMKENICQSRRFLFDDSKIVELKAMAANSGVENPTRVEVVTAILHKCAVTASTTALGSFMPNILLLAVNLRSIVSPPLANTSIGNISSCCAISVTHENQMKFPLLVGELRRSKTKLLQNYGKQLKKSELLFLNGTDKAQKLSDGDSFDCFIFTSWCRSPLYEVDFGWGRPVQVYVPSCPIKNTFRLTDTPAQDGIQALVTLEENVMPIFENDEELLAFASLIKDS</sequence>
<organism>
    <name type="scientific">Strychnos nux-vomica</name>
    <name type="common">Poison nut</name>
    <name type="synonym">Strychnine tree</name>
    <dbReference type="NCBI Taxonomy" id="28545"/>
    <lineage>
        <taxon>Eukaryota</taxon>
        <taxon>Viridiplantae</taxon>
        <taxon>Streptophyta</taxon>
        <taxon>Embryophyta</taxon>
        <taxon>Tracheophyta</taxon>
        <taxon>Spermatophyta</taxon>
        <taxon>Magnoliopsida</taxon>
        <taxon>eudicotyledons</taxon>
        <taxon>Gunneridae</taxon>
        <taxon>Pentapetalae</taxon>
        <taxon>asterids</taxon>
        <taxon>lamiids</taxon>
        <taxon>Gentianales</taxon>
        <taxon>Loganiaceae</taxon>
        <taxon>Strychnos</taxon>
    </lineage>
</organism>
<evidence type="ECO:0000250" key="1">
    <source>
        <dbReference type="UniProtKB" id="Q9FI78"/>
    </source>
</evidence>
<evidence type="ECO:0000250" key="2">
    <source>
        <dbReference type="UniProtKB" id="Q9ZTK5"/>
    </source>
</evidence>
<evidence type="ECO:0000269" key="3">
    <source>
    </source>
</evidence>
<evidence type="ECO:0000303" key="4">
    <source>
    </source>
</evidence>
<evidence type="ECO:0000305" key="5"/>
<feature type="chain" id="PRO_0000461124" description="17,18-epoxy-17-hydroxycur-19-ene N-malonyltransferase">
    <location>
        <begin position="1"/>
        <end position="464"/>
    </location>
</feature>
<feature type="active site" description="Proton acceptor" evidence="1">
    <location>
        <position position="191"/>
    </location>
</feature>
<feature type="active site" description="Proton acceptor" evidence="1">
    <location>
        <position position="403"/>
    </location>
</feature>
<gene>
    <name evidence="4" type="primary">AT</name>
</gene>
<proteinExistence type="evidence at protein level"/>
<protein>
    <recommendedName>
        <fullName>17,18-epoxy-17-hydroxycur-19-ene N-malonyltransferase</fullName>
        <ecNumber evidence="3">2.3.1.325</ecNumber>
    </recommendedName>
    <alternativeName>
        <fullName evidence="4">Acyltransferase</fullName>
        <shortName evidence="4">SnvAT</shortName>
    </alternativeName>
</protein>
<dbReference type="EC" id="2.3.1.325" evidence="3"/>
<dbReference type="EMBL" id="OM304295">
    <property type="protein sequence ID" value="UQZ09626.1"/>
    <property type="molecule type" value="mRNA"/>
</dbReference>
<dbReference type="SMR" id="P0DO84"/>
<dbReference type="KEGG" id="ag:UQZ09626"/>
<dbReference type="GO" id="GO:0005737">
    <property type="term" value="C:cytoplasm"/>
    <property type="evidence" value="ECO:0000314"/>
    <property type="project" value="UniProtKB"/>
</dbReference>
<dbReference type="GO" id="GO:0016407">
    <property type="term" value="F:acetyltransferase activity"/>
    <property type="evidence" value="ECO:0000314"/>
    <property type="project" value="UniProtKB"/>
</dbReference>
<dbReference type="GO" id="GO:0009821">
    <property type="term" value="P:alkaloid biosynthetic process"/>
    <property type="evidence" value="ECO:0000314"/>
    <property type="project" value="UniProtKB"/>
</dbReference>
<dbReference type="Gene3D" id="3.30.559.10">
    <property type="entry name" value="Chloramphenicol acetyltransferase-like domain"/>
    <property type="match status" value="2"/>
</dbReference>
<dbReference type="InterPro" id="IPR023213">
    <property type="entry name" value="CAT-like_dom_sf"/>
</dbReference>
<dbReference type="PANTHER" id="PTHR31623:SF88">
    <property type="entry name" value="ACYLSUGAR ACYLTRANSFERASE 3-LIKE"/>
    <property type="match status" value="1"/>
</dbReference>
<dbReference type="PANTHER" id="PTHR31623">
    <property type="entry name" value="F21J9.9"/>
    <property type="match status" value="1"/>
</dbReference>
<dbReference type="Pfam" id="PF02458">
    <property type="entry name" value="Transferase"/>
    <property type="match status" value="1"/>
</dbReference>